<sequence>GRDAYIADSENCTYTCALNPYCNDLCTKNGAKSGYCQWAGRYGNACWCIDLPDKVPIRISGSCR</sequence>
<reference key="1">
    <citation type="journal article" date="1997" name="J. Biol. Chem.">
        <title>Makatoxin I, a novel toxin isolated from the venom of the scorpion Buthus martensi Karsch, exhibits nitrergic actions.</title>
        <authorList>
            <person name="Gong J."/>
            <person name="Kini R.M."/>
            <person name="Gwee M.C.E."/>
            <person name="Gopalakrishnakone P."/>
            <person name="Chung M.C."/>
        </authorList>
    </citation>
    <scope>PROTEIN SEQUENCE</scope>
    <scope>MASS SPECTROMETRY</scope>
    <source>
        <tissue>Venom</tissue>
    </source>
</reference>
<dbReference type="SMR" id="P56569"/>
<dbReference type="GO" id="GO:0005576">
    <property type="term" value="C:extracellular region"/>
    <property type="evidence" value="ECO:0007669"/>
    <property type="project" value="UniProtKB-SubCell"/>
</dbReference>
<dbReference type="GO" id="GO:0019871">
    <property type="term" value="F:sodium channel inhibitor activity"/>
    <property type="evidence" value="ECO:0007669"/>
    <property type="project" value="InterPro"/>
</dbReference>
<dbReference type="GO" id="GO:0090729">
    <property type="term" value="F:toxin activity"/>
    <property type="evidence" value="ECO:0007669"/>
    <property type="project" value="UniProtKB-KW"/>
</dbReference>
<dbReference type="GO" id="GO:0006952">
    <property type="term" value="P:defense response"/>
    <property type="evidence" value="ECO:0007669"/>
    <property type="project" value="InterPro"/>
</dbReference>
<dbReference type="CDD" id="cd23106">
    <property type="entry name" value="neurotoxins_LC_scorpion"/>
    <property type="match status" value="1"/>
</dbReference>
<dbReference type="FunFam" id="3.30.30.10:FF:000002">
    <property type="entry name" value="Alpha-like toxin BmK-M1"/>
    <property type="match status" value="1"/>
</dbReference>
<dbReference type="Gene3D" id="3.30.30.10">
    <property type="entry name" value="Knottin, scorpion toxin-like"/>
    <property type="match status" value="1"/>
</dbReference>
<dbReference type="InterPro" id="IPR044062">
    <property type="entry name" value="LCN-type_CS_alpha_beta_dom"/>
</dbReference>
<dbReference type="InterPro" id="IPR003614">
    <property type="entry name" value="Scorpion_toxin-like"/>
</dbReference>
<dbReference type="InterPro" id="IPR036574">
    <property type="entry name" value="Scorpion_toxin-like_sf"/>
</dbReference>
<dbReference type="InterPro" id="IPR018218">
    <property type="entry name" value="Scorpion_toxinL"/>
</dbReference>
<dbReference type="InterPro" id="IPR002061">
    <property type="entry name" value="Scorpion_toxinL/defensin"/>
</dbReference>
<dbReference type="Pfam" id="PF00537">
    <property type="entry name" value="Toxin_3"/>
    <property type="match status" value="1"/>
</dbReference>
<dbReference type="PRINTS" id="PR00285">
    <property type="entry name" value="SCORPNTOXIN"/>
</dbReference>
<dbReference type="SMART" id="SM00505">
    <property type="entry name" value="Knot1"/>
    <property type="match status" value="1"/>
</dbReference>
<dbReference type="SUPFAM" id="SSF57095">
    <property type="entry name" value="Scorpion toxin-like"/>
    <property type="match status" value="1"/>
</dbReference>
<dbReference type="PROSITE" id="PS51863">
    <property type="entry name" value="LCN_CSAB"/>
    <property type="match status" value="1"/>
</dbReference>
<protein>
    <recommendedName>
        <fullName>Makatoxin-1</fullName>
    </recommendedName>
    <alternativeName>
        <fullName>Makatoxin I</fullName>
        <shortName>MKTXI</shortName>
        <shortName>MakatxI</shortName>
        <shortName>MkTx I</shortName>
    </alternativeName>
</protein>
<organism>
    <name type="scientific">Olivierus martensii</name>
    <name type="common">Manchurian scorpion</name>
    <name type="synonym">Mesobuthus martensii</name>
    <dbReference type="NCBI Taxonomy" id="34649"/>
    <lineage>
        <taxon>Eukaryota</taxon>
        <taxon>Metazoa</taxon>
        <taxon>Ecdysozoa</taxon>
        <taxon>Arthropoda</taxon>
        <taxon>Chelicerata</taxon>
        <taxon>Arachnida</taxon>
        <taxon>Scorpiones</taxon>
        <taxon>Buthida</taxon>
        <taxon>Buthoidea</taxon>
        <taxon>Buthidae</taxon>
        <taxon>Olivierus</taxon>
    </lineage>
</organism>
<feature type="chain" id="PRO_0000066756" description="Makatoxin-1">
    <location>
        <begin position="1"/>
        <end position="64"/>
    </location>
</feature>
<feature type="domain" description="LCN-type CS-alpha/beta" evidence="1">
    <location>
        <begin position="2"/>
        <end position="64"/>
    </location>
</feature>
<feature type="disulfide bond" evidence="1">
    <location>
        <begin position="12"/>
        <end position="63"/>
    </location>
</feature>
<feature type="disulfide bond" evidence="1">
    <location>
        <begin position="16"/>
        <end position="36"/>
    </location>
</feature>
<feature type="disulfide bond" evidence="1">
    <location>
        <begin position="22"/>
        <end position="46"/>
    </location>
</feature>
<feature type="disulfide bond" evidence="1">
    <location>
        <begin position="26"/>
        <end position="48"/>
    </location>
</feature>
<name>MKTX1_OLIMR</name>
<accession>P56569</accession>
<proteinExistence type="evidence at protein level"/>
<comment type="function">
    <text>This protein markedly relaxes the rat carbachol-precontracted anococcygeus muscle. This relaxation is inhibited by the inhibitor of nitric oxide (NO) synthase, N-nitro-L-arginine methyl ester (L-NAME), suggesting that the response induced by this protein is NO-mediated.</text>
</comment>
<comment type="subcellular location">
    <subcellularLocation>
        <location>Secreted</location>
    </subcellularLocation>
</comment>
<comment type="tissue specificity">
    <text>Expressed by the venom gland.</text>
</comment>
<comment type="domain">
    <text evidence="3">Has the structural arrangement of an alpha-helix connected to antiparallel beta-sheets by disulfide bonds (CS-alpha/beta).</text>
</comment>
<comment type="mass spectrometry"/>
<comment type="similarity">
    <text evidence="3">Belongs to the long (4 C-C) scorpion toxin superfamily. Sodium channel inhibitor family. Alpha subfamily.</text>
</comment>
<evidence type="ECO:0000255" key="1">
    <source>
        <dbReference type="PROSITE-ProRule" id="PRU01210"/>
    </source>
</evidence>
<evidence type="ECO:0000269" key="2">
    <source>
    </source>
</evidence>
<evidence type="ECO:0000305" key="3"/>
<keyword id="KW-0903">Direct protein sequencing</keyword>
<keyword id="KW-1015">Disulfide bond</keyword>
<keyword id="KW-0528">Neurotoxin</keyword>
<keyword id="KW-0964">Secreted</keyword>
<keyword id="KW-0800">Toxin</keyword>